<name>SYP_STRP1</name>
<comment type="function">
    <text evidence="1">Catalyzes the attachment of proline to tRNA(Pro) in a two-step reaction: proline is first activated by ATP to form Pro-AMP and then transferred to the acceptor end of tRNA(Pro). As ProRS can inadvertently accommodate and process non-cognate amino acids such as alanine and cysteine, to avoid such errors it has two additional distinct editing activities against alanine. One activity is designated as 'pretransfer' editing and involves the tRNA(Pro)-independent hydrolysis of activated Ala-AMP. The other activity is designated 'posttransfer' editing and involves deacylation of mischarged Ala-tRNA(Pro). The misacylated Cys-tRNA(Pro) is not edited by ProRS.</text>
</comment>
<comment type="catalytic activity">
    <reaction evidence="1">
        <text>tRNA(Pro) + L-proline + ATP = L-prolyl-tRNA(Pro) + AMP + diphosphate</text>
        <dbReference type="Rhea" id="RHEA:14305"/>
        <dbReference type="Rhea" id="RHEA-COMP:9700"/>
        <dbReference type="Rhea" id="RHEA-COMP:9702"/>
        <dbReference type="ChEBI" id="CHEBI:30616"/>
        <dbReference type="ChEBI" id="CHEBI:33019"/>
        <dbReference type="ChEBI" id="CHEBI:60039"/>
        <dbReference type="ChEBI" id="CHEBI:78442"/>
        <dbReference type="ChEBI" id="CHEBI:78532"/>
        <dbReference type="ChEBI" id="CHEBI:456215"/>
        <dbReference type="EC" id="6.1.1.15"/>
    </reaction>
</comment>
<comment type="subunit">
    <text evidence="1">Homodimer.</text>
</comment>
<comment type="subcellular location">
    <subcellularLocation>
        <location evidence="1">Cytoplasm</location>
    </subcellularLocation>
</comment>
<comment type="domain">
    <text evidence="1">Consists of three domains: the N-terminal catalytic domain, the editing domain and the C-terminal anticodon-binding domain.</text>
</comment>
<comment type="similarity">
    <text evidence="1">Belongs to the class-II aminoacyl-tRNA synthetase family. ProS type 1 subfamily.</text>
</comment>
<accession>Q99XY4</accession>
<accession>Q48WI4</accession>
<sequence length="618" mass="68703">MKQSKLLIPTLREMPSDAQVISHALMVRAGYVRQVSAGIYAYLPLANRTIEKFKTIMREEFEKIGAVEMLAPALLTADLWRESGRYETYGEDLYKLKNRDNSDFILGPTHEETFTTLVRDAVKSYKQLPLNLYQIQSKYRDEKRPRNGLLRTREFIMKDGYSFHHNYEDLDVTYEDYRQAYEAIFTRAGLDFKGIIGDGGAMGGKDSQEFMAITPARTDLDRWVVLDKSIASMDDIPKEVLEDIKAELAAWMISGEDTIAYSTESSYAANLEMATNEYKPSSKVAAEDALAEVETPHCKTIDEVAAFLSVDETQTIKTLLFVADNEPVVALLVGNDHINTVKLKNYLAADFLEPASEEEARAFFGAGFGSLGPVNLAQGSRIVADRKVQNLTNAVAGANKDGFHMTGVNPGRDFQAEYVDIREVKEGEMSPDGHGVLQFARGIEVGHIFKLGTRYSDSMGATILDENGRTVPIVMGCYGIGVSRILSAVIEQHARLFVNKTPKGDYRYAWGINFPKELAPFDVHLITVNVKDQVAQDLTAKLEADLMAKGYDVLTDDRNERVGSKFSDSDLIGLPIRVTVGKKAAEGIVEIKIKATGDSIEVNAENLIETLEILTKEH</sequence>
<feature type="chain" id="PRO_0000248779" description="Proline--tRNA ligase">
    <location>
        <begin position="1"/>
        <end position="618"/>
    </location>
</feature>
<keyword id="KW-0030">Aminoacyl-tRNA synthetase</keyword>
<keyword id="KW-0067">ATP-binding</keyword>
<keyword id="KW-0963">Cytoplasm</keyword>
<keyword id="KW-0436">Ligase</keyword>
<keyword id="KW-0547">Nucleotide-binding</keyword>
<keyword id="KW-0648">Protein biosynthesis</keyword>
<keyword id="KW-1185">Reference proteome</keyword>
<organism>
    <name type="scientific">Streptococcus pyogenes serotype M1</name>
    <dbReference type="NCBI Taxonomy" id="301447"/>
    <lineage>
        <taxon>Bacteria</taxon>
        <taxon>Bacillati</taxon>
        <taxon>Bacillota</taxon>
        <taxon>Bacilli</taxon>
        <taxon>Lactobacillales</taxon>
        <taxon>Streptococcaceae</taxon>
        <taxon>Streptococcus</taxon>
    </lineage>
</organism>
<protein>
    <recommendedName>
        <fullName evidence="1">Proline--tRNA ligase</fullName>
        <ecNumber evidence="1">6.1.1.15</ecNumber>
    </recommendedName>
    <alternativeName>
        <fullName evidence="1">Prolyl-tRNA synthetase</fullName>
        <shortName evidence="1">ProRS</shortName>
    </alternativeName>
</protein>
<proteinExistence type="inferred from homology"/>
<dbReference type="EC" id="6.1.1.15" evidence="1"/>
<dbReference type="EMBL" id="AE004092">
    <property type="protein sequence ID" value="AAK34655.1"/>
    <property type="molecule type" value="Genomic_DNA"/>
</dbReference>
<dbReference type="EMBL" id="CP000017">
    <property type="protein sequence ID" value="AAZ52291.1"/>
    <property type="molecule type" value="Genomic_DNA"/>
</dbReference>
<dbReference type="RefSeq" id="NP_269934.1">
    <property type="nucleotide sequence ID" value="NC_002737.2"/>
</dbReference>
<dbReference type="SMR" id="Q99XY4"/>
<dbReference type="PaxDb" id="1314-HKU360_01790"/>
<dbReference type="KEGG" id="spy:SPy_1962"/>
<dbReference type="KEGG" id="spz:M5005_Spy1673"/>
<dbReference type="PATRIC" id="fig|160490.10.peg.1709"/>
<dbReference type="HOGENOM" id="CLU_016739_0_0_9"/>
<dbReference type="OMA" id="NCDYAAN"/>
<dbReference type="Proteomes" id="UP000000750">
    <property type="component" value="Chromosome"/>
</dbReference>
<dbReference type="GO" id="GO:0005829">
    <property type="term" value="C:cytosol"/>
    <property type="evidence" value="ECO:0007669"/>
    <property type="project" value="TreeGrafter"/>
</dbReference>
<dbReference type="GO" id="GO:0002161">
    <property type="term" value="F:aminoacyl-tRNA deacylase activity"/>
    <property type="evidence" value="ECO:0007669"/>
    <property type="project" value="InterPro"/>
</dbReference>
<dbReference type="GO" id="GO:0005524">
    <property type="term" value="F:ATP binding"/>
    <property type="evidence" value="ECO:0007669"/>
    <property type="project" value="UniProtKB-UniRule"/>
</dbReference>
<dbReference type="GO" id="GO:0140096">
    <property type="term" value="F:catalytic activity, acting on a protein"/>
    <property type="evidence" value="ECO:0007669"/>
    <property type="project" value="UniProtKB-ARBA"/>
</dbReference>
<dbReference type="GO" id="GO:0004827">
    <property type="term" value="F:proline-tRNA ligase activity"/>
    <property type="evidence" value="ECO:0007669"/>
    <property type="project" value="UniProtKB-UniRule"/>
</dbReference>
<dbReference type="GO" id="GO:0016740">
    <property type="term" value="F:transferase activity"/>
    <property type="evidence" value="ECO:0007669"/>
    <property type="project" value="UniProtKB-ARBA"/>
</dbReference>
<dbReference type="GO" id="GO:0006433">
    <property type="term" value="P:prolyl-tRNA aminoacylation"/>
    <property type="evidence" value="ECO:0007669"/>
    <property type="project" value="UniProtKB-UniRule"/>
</dbReference>
<dbReference type="CDD" id="cd04334">
    <property type="entry name" value="ProRS-INS"/>
    <property type="match status" value="1"/>
</dbReference>
<dbReference type="CDD" id="cd00861">
    <property type="entry name" value="ProRS_anticodon_short"/>
    <property type="match status" value="1"/>
</dbReference>
<dbReference type="FunFam" id="3.40.50.800:FF:000011">
    <property type="entry name" value="Proline--tRNA ligase"/>
    <property type="match status" value="1"/>
</dbReference>
<dbReference type="Gene3D" id="3.40.50.800">
    <property type="entry name" value="Anticodon-binding domain"/>
    <property type="match status" value="1"/>
</dbReference>
<dbReference type="Gene3D" id="3.30.930.10">
    <property type="entry name" value="Bira Bifunctional Protein, Domain 2"/>
    <property type="match status" value="2"/>
</dbReference>
<dbReference type="Gene3D" id="3.90.960.10">
    <property type="entry name" value="YbaK/aminoacyl-tRNA synthetase-associated domain"/>
    <property type="match status" value="1"/>
</dbReference>
<dbReference type="HAMAP" id="MF_01569">
    <property type="entry name" value="Pro_tRNA_synth_type1"/>
    <property type="match status" value="1"/>
</dbReference>
<dbReference type="InterPro" id="IPR002314">
    <property type="entry name" value="aa-tRNA-synt_IIb"/>
</dbReference>
<dbReference type="InterPro" id="IPR006195">
    <property type="entry name" value="aa-tRNA-synth_II"/>
</dbReference>
<dbReference type="InterPro" id="IPR045864">
    <property type="entry name" value="aa-tRNA-synth_II/BPL/LPL"/>
</dbReference>
<dbReference type="InterPro" id="IPR004154">
    <property type="entry name" value="Anticodon-bd"/>
</dbReference>
<dbReference type="InterPro" id="IPR036621">
    <property type="entry name" value="Anticodon-bd_dom_sf"/>
</dbReference>
<dbReference type="InterPro" id="IPR002316">
    <property type="entry name" value="Pro-tRNA-ligase_IIa"/>
</dbReference>
<dbReference type="InterPro" id="IPR004500">
    <property type="entry name" value="Pro-tRNA-synth_IIa_bac-type"/>
</dbReference>
<dbReference type="InterPro" id="IPR023717">
    <property type="entry name" value="Pro-tRNA-Synthase_IIa_type1"/>
</dbReference>
<dbReference type="InterPro" id="IPR050062">
    <property type="entry name" value="Pro-tRNA_synthetase"/>
</dbReference>
<dbReference type="InterPro" id="IPR044140">
    <property type="entry name" value="ProRS_anticodon_short"/>
</dbReference>
<dbReference type="InterPro" id="IPR036754">
    <property type="entry name" value="YbaK/aa-tRNA-synt-asso_dom_sf"/>
</dbReference>
<dbReference type="InterPro" id="IPR007214">
    <property type="entry name" value="YbaK/aa-tRNA-synth-assoc-dom"/>
</dbReference>
<dbReference type="NCBIfam" id="NF006625">
    <property type="entry name" value="PRK09194.1"/>
    <property type="match status" value="1"/>
</dbReference>
<dbReference type="NCBIfam" id="TIGR00409">
    <property type="entry name" value="proS_fam_II"/>
    <property type="match status" value="2"/>
</dbReference>
<dbReference type="PANTHER" id="PTHR42753">
    <property type="entry name" value="MITOCHONDRIAL RIBOSOME PROTEIN L39/PROLYL-TRNA LIGASE FAMILY MEMBER"/>
    <property type="match status" value="1"/>
</dbReference>
<dbReference type="PANTHER" id="PTHR42753:SF2">
    <property type="entry name" value="PROLINE--TRNA LIGASE"/>
    <property type="match status" value="1"/>
</dbReference>
<dbReference type="Pfam" id="PF03129">
    <property type="entry name" value="HGTP_anticodon"/>
    <property type="match status" value="1"/>
</dbReference>
<dbReference type="Pfam" id="PF00587">
    <property type="entry name" value="tRNA-synt_2b"/>
    <property type="match status" value="1"/>
</dbReference>
<dbReference type="Pfam" id="PF04073">
    <property type="entry name" value="tRNA_edit"/>
    <property type="match status" value="1"/>
</dbReference>
<dbReference type="PRINTS" id="PR01046">
    <property type="entry name" value="TRNASYNTHPRO"/>
</dbReference>
<dbReference type="SUPFAM" id="SSF52954">
    <property type="entry name" value="Class II aaRS ABD-related"/>
    <property type="match status" value="1"/>
</dbReference>
<dbReference type="SUPFAM" id="SSF55681">
    <property type="entry name" value="Class II aaRS and biotin synthetases"/>
    <property type="match status" value="1"/>
</dbReference>
<dbReference type="SUPFAM" id="SSF55826">
    <property type="entry name" value="YbaK/ProRS associated domain"/>
    <property type="match status" value="1"/>
</dbReference>
<dbReference type="PROSITE" id="PS50862">
    <property type="entry name" value="AA_TRNA_LIGASE_II"/>
    <property type="match status" value="1"/>
</dbReference>
<gene>
    <name evidence="1" type="primary">proS</name>
    <name type="ordered locus">SPy_1962</name>
    <name type="ordered locus">M5005_Spy1673</name>
</gene>
<evidence type="ECO:0000255" key="1">
    <source>
        <dbReference type="HAMAP-Rule" id="MF_01569"/>
    </source>
</evidence>
<reference key="1">
    <citation type="journal article" date="2001" name="Proc. Natl. Acad. Sci. U.S.A.">
        <title>Complete genome sequence of an M1 strain of Streptococcus pyogenes.</title>
        <authorList>
            <person name="Ferretti J.J."/>
            <person name="McShan W.M."/>
            <person name="Ajdic D.J."/>
            <person name="Savic D.J."/>
            <person name="Savic G."/>
            <person name="Lyon K."/>
            <person name="Primeaux C."/>
            <person name="Sezate S."/>
            <person name="Suvorov A.N."/>
            <person name="Kenton S."/>
            <person name="Lai H.S."/>
            <person name="Lin S.P."/>
            <person name="Qian Y."/>
            <person name="Jia H.G."/>
            <person name="Najar F.Z."/>
            <person name="Ren Q."/>
            <person name="Zhu H."/>
            <person name="Song L."/>
            <person name="White J."/>
            <person name="Yuan X."/>
            <person name="Clifton S.W."/>
            <person name="Roe B.A."/>
            <person name="McLaughlin R.E."/>
        </authorList>
    </citation>
    <scope>NUCLEOTIDE SEQUENCE [LARGE SCALE GENOMIC DNA]</scope>
    <source>
        <strain>ATCC 700294 / SF370 / Serotype M1</strain>
    </source>
</reference>
<reference key="2">
    <citation type="journal article" date="2005" name="J. Infect. Dis.">
        <title>Evolutionary origin and emergence of a highly successful clone of serotype M1 group A Streptococcus involved multiple horizontal gene transfer events.</title>
        <authorList>
            <person name="Sumby P."/>
            <person name="Porcella S.F."/>
            <person name="Madrigal A.G."/>
            <person name="Barbian K.D."/>
            <person name="Virtaneva K."/>
            <person name="Ricklefs S.M."/>
            <person name="Sturdevant D.E."/>
            <person name="Graham M.R."/>
            <person name="Vuopio-Varkila J."/>
            <person name="Hoe N.P."/>
            <person name="Musser J.M."/>
        </authorList>
    </citation>
    <scope>NUCLEOTIDE SEQUENCE [LARGE SCALE GENOMIC DNA]</scope>
    <source>
        <strain>ATCC BAA-947 / MGAS5005 / Serotype M1</strain>
    </source>
</reference>